<dbReference type="EMBL" id="AJ938182">
    <property type="protein sequence ID" value="CAI81501.1"/>
    <property type="status" value="ALT_INIT"/>
    <property type="molecule type" value="Genomic_DNA"/>
</dbReference>
<dbReference type="SMR" id="Q2YU47"/>
<dbReference type="KEGG" id="sab:SAB1812c"/>
<dbReference type="HOGENOM" id="CLU_199533_0_0_9"/>
<dbReference type="HAMAP" id="MF_00829">
    <property type="entry name" value="UPF0435"/>
    <property type="match status" value="1"/>
</dbReference>
<dbReference type="InterPro" id="IPR009507">
    <property type="entry name" value="UPF0435"/>
</dbReference>
<dbReference type="Pfam" id="PF06569">
    <property type="entry name" value="DUF1128"/>
    <property type="match status" value="1"/>
</dbReference>
<organism>
    <name type="scientific">Staphylococcus aureus (strain bovine RF122 / ET3-1)</name>
    <dbReference type="NCBI Taxonomy" id="273036"/>
    <lineage>
        <taxon>Bacteria</taxon>
        <taxon>Bacillati</taxon>
        <taxon>Bacillota</taxon>
        <taxon>Bacilli</taxon>
        <taxon>Bacillales</taxon>
        <taxon>Staphylococcaceae</taxon>
        <taxon>Staphylococcus</taxon>
    </lineage>
</organism>
<name>Y1812_STAAB</name>
<proteinExistence type="inferred from homology"/>
<gene>
    <name type="ordered locus">SAB1812c</name>
</gene>
<comment type="similarity">
    <text evidence="1">Belongs to the UPF0435 family.</text>
</comment>
<comment type="sequence caution" evidence="2">
    <conflict type="erroneous initiation">
        <sequence resource="EMBL-CDS" id="CAI81501"/>
    </conflict>
</comment>
<sequence length="68" mass="7774">MAMTNEEKVLAIREKLNIVNQGLLDPEKYKNANEEQLTDIYDFVQSRERLSPSEVTAIADALGQLRHD</sequence>
<protein>
    <recommendedName>
        <fullName evidence="1">UPF0435 protein SAB1812c</fullName>
    </recommendedName>
</protein>
<feature type="chain" id="PRO_0000291415" description="UPF0435 protein SAB1812c">
    <location>
        <begin position="1"/>
        <end position="68"/>
    </location>
</feature>
<accession>Q2YU47</accession>
<evidence type="ECO:0000255" key="1">
    <source>
        <dbReference type="HAMAP-Rule" id="MF_00829"/>
    </source>
</evidence>
<evidence type="ECO:0000305" key="2"/>
<reference key="1">
    <citation type="journal article" date="2007" name="PLoS ONE">
        <title>Molecular correlates of host specialization in Staphylococcus aureus.</title>
        <authorList>
            <person name="Herron-Olson L."/>
            <person name="Fitzgerald J.R."/>
            <person name="Musser J.M."/>
            <person name="Kapur V."/>
        </authorList>
    </citation>
    <scope>NUCLEOTIDE SEQUENCE [LARGE SCALE GENOMIC DNA]</scope>
    <source>
        <strain>bovine RF122 / ET3-1</strain>
    </source>
</reference>